<sequence length="833" mass="91296">MDVVDPDIFNRDPRDHYDLLQRLGGGTYGEVFKARDKVSGDLVALKMVKMEPDDDVSTLQKEILILKTCRHANIVAYHGSYLWLQKLWICMEFCGAGSLQDIYQVTGSLSELQISYVCREVLQGLAYLHSQKKIHRDIKGANILINDAGEVRLADFGISAQIGATLARRLSFIGTPYWMAPEVAAVALKGGYNELCDIWSLGITAIELAELQPPLFDVHPLRVLFLMTKSGYQPPRLKEKGKWSAAFHNFIKVTLTKSPKKRPSATKMLSHQLVSQPGLNRGLILDLLDKLKNPGKGPSIGDIEDEEPELPPAIPRRIRSTHRSSSLGIPDADCCRRHMEFRKLRGMETRPPANTARLQPPRDLRSSSPRKQLSESSDDDYDDVDIPTPAEDTPPPLPPKPKFRSPSDEGPGSMGDDGQLSPGVLVRCASGPPPNSPRPGPPPSTSSPHLTAHSEPSLWNPPSRELDKPPLLPPKKEKMKRKGCALLVKLFNGCPLRIHSTAAWTHPSTKDQHLLLGAEEGIFILNRNDQEATLEMLFPSRTTWVYSINNVLMSLSGKTPHLYSHSILGLLERKETRAGNPIAHISPHRLLARKNMVSTKIQDTKGCRACCVAEGASSGGPFLCGALETSVVLLQWYQPMNKFLLVRQVLFPLPTPLSVFALLTGPGSELPAVCIGVSPGRPGKSVLFHTVRFGALSCWLGEMSTEHRGPVQVTQVEEDMVMVLMDGSVKLVTPEGSPVRGLRTPEIPMTEAVEAVAMVGGQLQAFWKHGVQVWALGSDQLLQELRDPTLTFRLLGSPRLECSGTISPHCNLLLPGSSNSPASASRVAGITGL</sequence>
<comment type="function">
    <text evidence="1 6 7 8">Serine/threonine-protein kinase, which plays a role in the response to environmental stress (PubMed:24362026). Appears to act upstream of the JUN N-terminal pathway (PubMed:8824585). Activator of the Hippo signaling pathway which plays a pivotal role in organ size control and tumor suppression by restricting proliferation and promoting apoptosis. MAP4Ks act in parallel to and are partially redundant with STK3/MST2 and STK4/MST2 in the phosphorylation and activation of LATS1/2, and establish MAP4Ks as components of the expanded Hippo pathway (PubMed:26437443). May play a role in hematopoietic lineage decisions and growth regulation (PubMed:24362026, PubMed:8824585). Together with CLNK, it enhances CD3-triggered activation of T-cells and subsequent IL2 production (By similarity).</text>
</comment>
<comment type="catalytic activity">
    <reaction evidence="8">
        <text>L-seryl-[protein] + ATP = O-phospho-L-seryl-[protein] + ADP + H(+)</text>
        <dbReference type="Rhea" id="RHEA:17989"/>
        <dbReference type="Rhea" id="RHEA-COMP:9863"/>
        <dbReference type="Rhea" id="RHEA-COMP:11604"/>
        <dbReference type="ChEBI" id="CHEBI:15378"/>
        <dbReference type="ChEBI" id="CHEBI:29999"/>
        <dbReference type="ChEBI" id="CHEBI:30616"/>
        <dbReference type="ChEBI" id="CHEBI:83421"/>
        <dbReference type="ChEBI" id="CHEBI:456216"/>
        <dbReference type="EC" id="2.7.11.1"/>
    </reaction>
</comment>
<comment type="catalytic activity">
    <reaction evidence="8">
        <text>L-threonyl-[protein] + ATP = O-phospho-L-threonyl-[protein] + ADP + H(+)</text>
        <dbReference type="Rhea" id="RHEA:46608"/>
        <dbReference type="Rhea" id="RHEA-COMP:11060"/>
        <dbReference type="Rhea" id="RHEA-COMP:11605"/>
        <dbReference type="ChEBI" id="CHEBI:15378"/>
        <dbReference type="ChEBI" id="CHEBI:30013"/>
        <dbReference type="ChEBI" id="CHEBI:30616"/>
        <dbReference type="ChEBI" id="CHEBI:61977"/>
        <dbReference type="ChEBI" id="CHEBI:456216"/>
        <dbReference type="EC" id="2.7.11.1"/>
    </reaction>
</comment>
<comment type="cofactor">
    <cofactor evidence="8">
        <name>Mg(2+)</name>
        <dbReference type="ChEBI" id="CHEBI:18420"/>
    </cofactor>
</comment>
<comment type="subunit">
    <text evidence="1 6 8">Interacts with MAP3K1 (PubMed:8824585). Interacts with FBXW8 (PubMed:24362026). Interacts with CLNK (via its SH2 domain) (By similarity).</text>
</comment>
<comment type="interaction">
    <interactant intactId="EBI-881">
        <id>Q92918</id>
    </interactant>
    <interactant intactId="EBI-375543">
        <id>P00519</id>
        <label>ABL1</label>
    </interactant>
    <organismsDiffer>false</organismsDiffer>
    <experiments>3</experiments>
</comment>
<comment type="interaction">
    <interactant intactId="EBI-881">
        <id>Q92918</id>
    </interactant>
    <interactant intactId="EBI-886">
        <id>P46108</id>
        <label>CRK</label>
    </interactant>
    <organismsDiffer>false</organismsDiffer>
    <experiments>3</experiments>
</comment>
<comment type="interaction">
    <interactant intactId="EBI-881">
        <id>Q92918</id>
    </interactant>
    <interactant intactId="EBI-910">
        <id>P46109</id>
        <label>CRKL</label>
    </interactant>
    <organismsDiffer>false</organismsDiffer>
    <experiments>5</experiments>
</comment>
<comment type="interaction">
    <interactant intactId="EBI-881">
        <id>Q92918</id>
    </interactant>
    <interactant intactId="EBI-515315">
        <id>P06241</id>
        <label>FYN</label>
    </interactant>
    <organismsDiffer>false</organismsDiffer>
    <experiments>2</experiments>
</comment>
<comment type="interaction">
    <interactant intactId="EBI-881">
        <id>Q92918</id>
    </interactant>
    <interactant intactId="EBI-401755">
        <id>P62993</id>
        <label>GRB2</label>
    </interactant>
    <organismsDiffer>false</organismsDiffer>
    <experiments>9</experiments>
</comment>
<comment type="interaction">
    <interactant intactId="EBI-881">
        <id>Q92918</id>
    </interactant>
    <interactant intactId="EBI-352572">
        <id>P08238</id>
        <label>HSP90AB1</label>
    </interactant>
    <organismsDiffer>false</organismsDiffer>
    <experiments>4</experiments>
</comment>
<comment type="interaction">
    <interactant intactId="EBI-881">
        <id>Q92918</id>
    </interactant>
    <interactant intactId="EBI-389883">
        <id>P16333</id>
        <label>NCK1</label>
    </interactant>
    <organismsDiffer>false</organismsDiffer>
    <experiments>4</experiments>
</comment>
<comment type="interaction">
    <interactant intactId="EBI-881">
        <id>Q92918</id>
    </interactant>
    <interactant intactId="EBI-79464">
        <id>P27986</id>
        <label>PIK3R1</label>
    </interactant>
    <organismsDiffer>false</organismsDiffer>
    <experiments>2</experiments>
</comment>
<comment type="interaction">
    <interactant intactId="EBI-881">
        <id>Q92918</id>
    </interactant>
    <interactant intactId="EBI-79387">
        <id>P19174</id>
        <label>PLCG1</label>
    </interactant>
    <organismsDiffer>false</organismsDiffer>
    <experiments>6</experiments>
</comment>
<comment type="interaction">
    <interactant intactId="EBI-881">
        <id>Q92918</id>
    </interactant>
    <interactant intactId="EBI-4315002">
        <id>Q13291</id>
        <label>SLAMF1</label>
    </interactant>
    <organismsDiffer>false</organismsDiffer>
    <experiments>3</experiments>
</comment>
<comment type="interaction">
    <interactant intactId="EBI-881">
        <id>Q92918</id>
    </interactant>
    <interactant intactId="EBI-356498">
        <id>P62258</id>
        <label>YWHAE</label>
    </interactant>
    <organismsDiffer>false</organismsDiffer>
    <experiments>2</experiments>
</comment>
<comment type="alternative products">
    <event type="alternative splicing"/>
    <isoform>
        <id>Q92918-1</id>
        <name>1</name>
        <sequence type="displayed"/>
    </isoform>
    <isoform>
        <id>Q92918-2</id>
        <name>2</name>
        <sequence type="described" ref="VSP_040340"/>
    </isoform>
</comment>
<comment type="tissue specificity">
    <text evidence="8">Expressed primarily in hematopoietic organs, including bone marrow, spleen and thymus. Also expressed at very low levels in lung, kidney, mammary glands and small intestine.</text>
</comment>
<comment type="PTM">
    <text evidence="6 8">Autophosphorylates: phosphorylation promotes ubiquitination by the Cul7-RING(FBXW8) ubiquitin-protein ligase complex, leading to its degradation by the proteasome.</text>
</comment>
<comment type="PTM">
    <text evidence="1">Tyrosine-phosphorylated after activation of hemopoietic cells.</text>
</comment>
<comment type="PTM">
    <text evidence="6">Ubiquitinated by the Cul7-RING(FBXW8) ubiquitin-protein ligase complex following autophosphorylation, leading to its degradation by the proteasome.</text>
</comment>
<comment type="similarity">
    <text evidence="9">Belongs to the protein kinase superfamily. STE Ser/Thr protein kinase family. STE20 subfamily.</text>
</comment>
<evidence type="ECO:0000250" key="1">
    <source>
        <dbReference type="UniProtKB" id="P70218"/>
    </source>
</evidence>
<evidence type="ECO:0000255" key="2">
    <source>
        <dbReference type="PROSITE-ProRule" id="PRU00159"/>
    </source>
</evidence>
<evidence type="ECO:0000255" key="3">
    <source>
        <dbReference type="PROSITE-ProRule" id="PRU00795"/>
    </source>
</evidence>
<evidence type="ECO:0000256" key="4">
    <source>
        <dbReference type="SAM" id="MobiDB-lite"/>
    </source>
</evidence>
<evidence type="ECO:0000269" key="5">
    <source>
    </source>
</evidence>
<evidence type="ECO:0000269" key="6">
    <source>
    </source>
</evidence>
<evidence type="ECO:0000269" key="7">
    <source>
    </source>
</evidence>
<evidence type="ECO:0000269" key="8">
    <source>
    </source>
</evidence>
<evidence type="ECO:0000305" key="9"/>
<evidence type="ECO:0000312" key="10">
    <source>
        <dbReference type="EMBL" id="AAB97983.1"/>
    </source>
</evidence>
<evidence type="ECO:0000312" key="11">
    <source>
        <dbReference type="HGNC" id="HGNC:6863"/>
    </source>
</evidence>
<evidence type="ECO:0007744" key="12">
    <source>
    </source>
</evidence>
<evidence type="ECO:0007744" key="13">
    <source>
    </source>
</evidence>
<evidence type="ECO:0007829" key="14">
    <source>
        <dbReference type="PDB" id="6CQD"/>
    </source>
</evidence>
<evidence type="ECO:0007829" key="15">
    <source>
        <dbReference type="PDB" id="7R9N"/>
    </source>
</evidence>
<evidence type="ECO:0007829" key="16">
    <source>
        <dbReference type="PDB" id="7SIU"/>
    </source>
</evidence>
<evidence type="ECO:0007829" key="17">
    <source>
        <dbReference type="PDB" id="8EEC"/>
    </source>
</evidence>
<evidence type="ECO:0007829" key="18">
    <source>
        <dbReference type="PDB" id="8FH4"/>
    </source>
</evidence>
<evidence type="ECO:0007829" key="19">
    <source>
        <dbReference type="PDB" id="8FKO"/>
    </source>
</evidence>
<gene>
    <name evidence="11" type="primary">MAP4K1</name>
    <name type="synonym">HPK1</name>
</gene>
<protein>
    <recommendedName>
        <fullName>Mitogen-activated protein kinase kinase kinase kinase 1</fullName>
        <ecNumber evidence="8">2.7.11.1</ecNumber>
    </recommendedName>
    <alternativeName>
        <fullName>Hematopoietic progenitor kinase</fullName>
    </alternativeName>
    <alternativeName>
        <fullName>MAPK/ERK kinase kinase kinase 1</fullName>
        <shortName>MEK kinase kinase 1</shortName>
        <shortName>MEKKK 1</shortName>
    </alternativeName>
</protein>
<name>M4K1_HUMAN</name>
<keyword id="KW-0002">3D-structure</keyword>
<keyword id="KW-0025">Alternative splicing</keyword>
<keyword id="KW-0067">ATP-binding</keyword>
<keyword id="KW-0418">Kinase</keyword>
<keyword id="KW-0547">Nucleotide-binding</keyword>
<keyword id="KW-0597">Phosphoprotein</keyword>
<keyword id="KW-1267">Proteomics identification</keyword>
<keyword id="KW-1185">Reference proteome</keyword>
<keyword id="KW-0723">Serine/threonine-protein kinase</keyword>
<keyword id="KW-0808">Transferase</keyword>
<keyword id="KW-0832">Ubl conjugation</keyword>
<proteinExistence type="evidence at protein level"/>
<dbReference type="EC" id="2.7.11.1" evidence="8"/>
<dbReference type="EMBL" id="U66464">
    <property type="protein sequence ID" value="AAB97983.1"/>
    <property type="molecule type" value="mRNA"/>
</dbReference>
<dbReference type="EMBL" id="AC005933">
    <property type="status" value="NOT_ANNOTATED_CDS"/>
    <property type="molecule type" value="Genomic_DNA"/>
</dbReference>
<dbReference type="EMBL" id="AC008649">
    <property type="status" value="NOT_ANNOTATED_CDS"/>
    <property type="molecule type" value="Genomic_DNA"/>
</dbReference>
<dbReference type="CCDS" id="CCDS42564.1">
    <molecule id="Q92918-2"/>
</dbReference>
<dbReference type="CCDS" id="CCDS59385.1">
    <molecule id="Q92918-1"/>
</dbReference>
<dbReference type="RefSeq" id="NP_001036065.1">
    <molecule id="Q92918-2"/>
    <property type="nucleotide sequence ID" value="NM_001042600.3"/>
</dbReference>
<dbReference type="RefSeq" id="NP_009112.1">
    <molecule id="Q92918-1"/>
    <property type="nucleotide sequence ID" value="NM_007181.6"/>
</dbReference>
<dbReference type="PDB" id="6CQD">
    <property type="method" value="X-ray"/>
    <property type="resolution" value="2.12 A"/>
    <property type="chains" value="A/B=2-293"/>
</dbReference>
<dbReference type="PDB" id="6CQE">
    <property type="method" value="X-ray"/>
    <property type="resolution" value="1.89 A"/>
    <property type="chains" value="A/B=2-293"/>
</dbReference>
<dbReference type="PDB" id="6CQF">
    <property type="method" value="X-ray"/>
    <property type="resolution" value="2.25 A"/>
    <property type="chains" value="A=2-293"/>
</dbReference>
<dbReference type="PDB" id="6NFY">
    <property type="method" value="X-ray"/>
    <property type="resolution" value="2.17 A"/>
    <property type="chains" value="A/B=10-307"/>
</dbReference>
<dbReference type="PDB" id="6NFZ">
    <property type="method" value="X-ray"/>
    <property type="resolution" value="2.97 A"/>
    <property type="chains" value="A/B=1-307"/>
</dbReference>
<dbReference type="PDB" id="6NG0">
    <property type="method" value="X-ray"/>
    <property type="resolution" value="2.05 A"/>
    <property type="chains" value="A/B=1-307"/>
</dbReference>
<dbReference type="PDB" id="7KAC">
    <property type="method" value="X-ray"/>
    <property type="resolution" value="1.85 A"/>
    <property type="chains" value="A/B=1-319"/>
</dbReference>
<dbReference type="PDB" id="7L24">
    <property type="method" value="X-ray"/>
    <property type="resolution" value="2.68 A"/>
    <property type="chains" value="A/B/C/D=7-294"/>
</dbReference>
<dbReference type="PDB" id="7L25">
    <property type="method" value="X-ray"/>
    <property type="resolution" value="1.85 A"/>
    <property type="chains" value="A/B=6-294"/>
</dbReference>
<dbReference type="PDB" id="7L26">
    <property type="method" value="X-ray"/>
    <property type="resolution" value="2.30 A"/>
    <property type="chains" value="A/B/C/D=8-294"/>
</dbReference>
<dbReference type="PDB" id="7M0K">
    <property type="method" value="X-ray"/>
    <property type="resolution" value="2.01 A"/>
    <property type="chains" value="A/B/C/D=6-294"/>
</dbReference>
<dbReference type="PDB" id="7M0L">
    <property type="method" value="X-ray"/>
    <property type="resolution" value="2.43 A"/>
    <property type="chains" value="A/B/C/D=5-294"/>
</dbReference>
<dbReference type="PDB" id="7M0M">
    <property type="method" value="X-ray"/>
    <property type="resolution" value="1.93 A"/>
    <property type="chains" value="A/B=2-294"/>
</dbReference>
<dbReference type="PDB" id="7R9L">
    <property type="method" value="X-ray"/>
    <property type="resolution" value="2.33 A"/>
    <property type="chains" value="A=2-293"/>
</dbReference>
<dbReference type="PDB" id="7R9N">
    <property type="method" value="X-ray"/>
    <property type="resolution" value="1.50 A"/>
    <property type="chains" value="A/B=2-293"/>
</dbReference>
<dbReference type="PDB" id="7R9P">
    <property type="method" value="X-ray"/>
    <property type="resolution" value="2.27 A"/>
    <property type="chains" value="A/B=2-293"/>
</dbReference>
<dbReference type="PDB" id="7R9T">
    <property type="method" value="X-ray"/>
    <property type="resolution" value="2.00 A"/>
    <property type="chains" value="A/B=2-293"/>
</dbReference>
<dbReference type="PDB" id="7SIU">
    <property type="method" value="X-ray"/>
    <property type="resolution" value="1.79 A"/>
    <property type="chains" value="A/B=2-295"/>
</dbReference>
<dbReference type="PDB" id="8CDW">
    <property type="method" value="X-ray"/>
    <property type="resolution" value="1.94 A"/>
    <property type="chains" value="A/B=1-307"/>
</dbReference>
<dbReference type="PDB" id="8CIJ">
    <property type="method" value="X-ray"/>
    <property type="resolution" value="2.82 A"/>
    <property type="chains" value="A=1-307"/>
</dbReference>
<dbReference type="PDB" id="8EEC">
    <property type="method" value="X-ray"/>
    <property type="resolution" value="2.50 A"/>
    <property type="chains" value="A=481-799"/>
</dbReference>
<dbReference type="PDB" id="8FH4">
    <property type="method" value="X-ray"/>
    <property type="resolution" value="1.83 A"/>
    <property type="chains" value="A/B/C/D=1-307"/>
</dbReference>
<dbReference type="PDB" id="8FJZ">
    <property type="method" value="X-ray"/>
    <property type="resolution" value="1.90 A"/>
    <property type="chains" value="A/B/C/D/E/F=1-307"/>
</dbReference>
<dbReference type="PDB" id="8FKO">
    <property type="method" value="X-ray"/>
    <property type="resolution" value="2.10 A"/>
    <property type="chains" value="A/B/C/D/E/F=1-307"/>
</dbReference>
<dbReference type="PDB" id="8PAR">
    <property type="method" value="X-ray"/>
    <property type="resolution" value="2.00 A"/>
    <property type="chains" value="A=1-307"/>
</dbReference>
<dbReference type="PDB" id="8PAS">
    <property type="method" value="X-ray"/>
    <property type="resolution" value="2.70 A"/>
    <property type="chains" value="A/B=7-295"/>
</dbReference>
<dbReference type="PDB" id="8PAU">
    <property type="method" value="X-ray"/>
    <property type="resolution" value="2.80 A"/>
    <property type="chains" value="A/B=7-294"/>
</dbReference>
<dbReference type="PDB" id="8XN7">
    <property type="method" value="X-ray"/>
    <property type="resolution" value="2.65 A"/>
    <property type="chains" value="A/B=2-293"/>
</dbReference>
<dbReference type="PDB" id="9BI8">
    <property type="method" value="X-ray"/>
    <property type="resolution" value="2.25 A"/>
    <property type="chains" value="A/B=2-293"/>
</dbReference>
<dbReference type="PDB" id="9BIK">
    <property type="method" value="X-ray"/>
    <property type="resolution" value="2.25 A"/>
    <property type="chains" value="A/B=2-293"/>
</dbReference>
<dbReference type="PDB" id="9BJ1">
    <property type="method" value="X-ray"/>
    <property type="resolution" value="2.18 A"/>
    <property type="chains" value="A/B=2-293"/>
</dbReference>
<dbReference type="PDB" id="9CZT">
    <property type="method" value="X-ray"/>
    <property type="resolution" value="1.69 A"/>
    <property type="chains" value="A/B=1-307"/>
</dbReference>
<dbReference type="PDB" id="9CZU">
    <property type="method" value="X-ray"/>
    <property type="resolution" value="1.85 A"/>
    <property type="chains" value="A/B/C/D=1-307"/>
</dbReference>
<dbReference type="PDB" id="9CZW">
    <property type="method" value="X-ray"/>
    <property type="resolution" value="1.59 A"/>
    <property type="chains" value="A/B=1-307"/>
</dbReference>
<dbReference type="PDB" id="9CZX">
    <property type="method" value="X-ray"/>
    <property type="resolution" value="1.46 A"/>
    <property type="chains" value="A/B=1-307"/>
</dbReference>
<dbReference type="PDB" id="9D00">
    <property type="method" value="X-ray"/>
    <property type="resolution" value="1.95 A"/>
    <property type="chains" value="A/B/C/D=1-307"/>
</dbReference>
<dbReference type="PDB" id="9H8D">
    <property type="method" value="X-ray"/>
    <property type="resolution" value="1.64 A"/>
    <property type="chains" value="A=2-293"/>
</dbReference>
<dbReference type="PDB" id="9H8E">
    <property type="method" value="X-ray"/>
    <property type="resolution" value="1.63 A"/>
    <property type="chains" value="A=2-293"/>
</dbReference>
<dbReference type="PDB" id="9H8F">
    <property type="method" value="X-ray"/>
    <property type="resolution" value="1.39 A"/>
    <property type="chains" value="A=2-293"/>
</dbReference>
<dbReference type="PDBsum" id="6CQD"/>
<dbReference type="PDBsum" id="6CQE"/>
<dbReference type="PDBsum" id="6CQF"/>
<dbReference type="PDBsum" id="6NFY"/>
<dbReference type="PDBsum" id="6NFZ"/>
<dbReference type="PDBsum" id="6NG0"/>
<dbReference type="PDBsum" id="7KAC"/>
<dbReference type="PDBsum" id="7L24"/>
<dbReference type="PDBsum" id="7L25"/>
<dbReference type="PDBsum" id="7L26"/>
<dbReference type="PDBsum" id="7M0K"/>
<dbReference type="PDBsum" id="7M0L"/>
<dbReference type="PDBsum" id="7M0M"/>
<dbReference type="PDBsum" id="7R9L"/>
<dbReference type="PDBsum" id="7R9N"/>
<dbReference type="PDBsum" id="7R9P"/>
<dbReference type="PDBsum" id="7R9T"/>
<dbReference type="PDBsum" id="7SIU"/>
<dbReference type="PDBsum" id="8CDW"/>
<dbReference type="PDBsum" id="8CIJ"/>
<dbReference type="PDBsum" id="8EEC"/>
<dbReference type="PDBsum" id="8FH4"/>
<dbReference type="PDBsum" id="8FJZ"/>
<dbReference type="PDBsum" id="8FKO"/>
<dbReference type="PDBsum" id="8PAR"/>
<dbReference type="PDBsum" id="8PAS"/>
<dbReference type="PDBsum" id="8PAU"/>
<dbReference type="PDBsum" id="8XN7"/>
<dbReference type="PDBsum" id="9BI8"/>
<dbReference type="PDBsum" id="9BIK"/>
<dbReference type="PDBsum" id="9BJ1"/>
<dbReference type="PDBsum" id="9CZT"/>
<dbReference type="PDBsum" id="9CZU"/>
<dbReference type="PDBsum" id="9CZW"/>
<dbReference type="PDBsum" id="9CZX"/>
<dbReference type="PDBsum" id="9D00"/>
<dbReference type="PDBsum" id="9H8D"/>
<dbReference type="PDBsum" id="9H8E"/>
<dbReference type="PDBsum" id="9H8F"/>
<dbReference type="SMR" id="Q92918"/>
<dbReference type="BioGRID" id="116354">
    <property type="interactions" value="122"/>
</dbReference>
<dbReference type="DIP" id="DIP-31019N"/>
<dbReference type="FunCoup" id="Q92918">
    <property type="interactions" value="556"/>
</dbReference>
<dbReference type="IntAct" id="Q92918">
    <property type="interactions" value="70"/>
</dbReference>
<dbReference type="MINT" id="Q92918"/>
<dbReference type="STRING" id="9606.ENSP00000465039"/>
<dbReference type="BindingDB" id="Q92918"/>
<dbReference type="ChEMBL" id="CHEMBL5749"/>
<dbReference type="DrugBank" id="DB12010">
    <property type="generic name" value="Fostamatinib"/>
</dbReference>
<dbReference type="DrugCentral" id="Q92918"/>
<dbReference type="GuidetoPHARMACOLOGY" id="2085"/>
<dbReference type="iPTMnet" id="Q92918"/>
<dbReference type="PhosphoSitePlus" id="Q92918"/>
<dbReference type="BioMuta" id="MAP4K1"/>
<dbReference type="DMDM" id="29427916"/>
<dbReference type="jPOST" id="Q92918"/>
<dbReference type="MassIVE" id="Q92918"/>
<dbReference type="PaxDb" id="9606-ENSP00000465039"/>
<dbReference type="PeptideAtlas" id="Q92918"/>
<dbReference type="ProteomicsDB" id="75603">
    <molecule id="Q92918-1"/>
</dbReference>
<dbReference type="ProteomicsDB" id="75604">
    <molecule id="Q92918-2"/>
</dbReference>
<dbReference type="Antibodypedia" id="2067">
    <property type="antibodies" value="565 antibodies from 39 providers"/>
</dbReference>
<dbReference type="DNASU" id="11184"/>
<dbReference type="Ensembl" id="ENST00000396857.7">
    <molecule id="Q92918-2"/>
    <property type="protein sequence ID" value="ENSP00000380066.1"/>
    <property type="gene ID" value="ENSG00000104814.13"/>
</dbReference>
<dbReference type="Ensembl" id="ENST00000591517.5">
    <molecule id="Q92918-1"/>
    <property type="protein sequence ID" value="ENSP00000465039.1"/>
    <property type="gene ID" value="ENSG00000104814.13"/>
</dbReference>
<dbReference type="GeneID" id="11184"/>
<dbReference type="KEGG" id="hsa:11184"/>
<dbReference type="MANE-Select" id="ENST00000396857.7">
    <molecule id="Q92918-2"/>
    <property type="protein sequence ID" value="ENSP00000380066.1"/>
    <property type="RefSeq nucleotide sequence ID" value="NM_001042600.3"/>
    <property type="RefSeq protein sequence ID" value="NP_001036065.1"/>
</dbReference>
<dbReference type="UCSC" id="uc002oix.3">
    <molecule id="Q92918-1"/>
    <property type="organism name" value="human"/>
</dbReference>
<dbReference type="AGR" id="HGNC:6863"/>
<dbReference type="CTD" id="11184"/>
<dbReference type="DisGeNET" id="11184"/>
<dbReference type="GeneCards" id="MAP4K1"/>
<dbReference type="HGNC" id="HGNC:6863">
    <property type="gene designation" value="MAP4K1"/>
</dbReference>
<dbReference type="HPA" id="ENSG00000104814">
    <property type="expression patterns" value="Tissue enhanced (intestine, lymphoid tissue)"/>
</dbReference>
<dbReference type="MIM" id="601983">
    <property type="type" value="gene"/>
</dbReference>
<dbReference type="neXtProt" id="NX_Q92918"/>
<dbReference type="OpenTargets" id="ENSG00000104814"/>
<dbReference type="PharmGKB" id="PA30609"/>
<dbReference type="VEuPathDB" id="HostDB:ENSG00000104814"/>
<dbReference type="eggNOG" id="KOG0576">
    <property type="taxonomic scope" value="Eukaryota"/>
</dbReference>
<dbReference type="GeneTree" id="ENSGT00940000160308"/>
<dbReference type="InParanoid" id="Q92918"/>
<dbReference type="OMA" id="IQVFWKH"/>
<dbReference type="OrthoDB" id="8693905at2759"/>
<dbReference type="PAN-GO" id="Q92918">
    <property type="GO annotations" value="4 GO annotations based on evolutionary models"/>
</dbReference>
<dbReference type="PhylomeDB" id="Q92918"/>
<dbReference type="TreeFam" id="TF105121"/>
<dbReference type="PathwayCommons" id="Q92918"/>
<dbReference type="SignaLink" id="Q92918"/>
<dbReference type="SIGNOR" id="Q92918"/>
<dbReference type="BioGRID-ORCS" id="11184">
    <property type="hits" value="21 hits in 1190 CRISPR screens"/>
</dbReference>
<dbReference type="ChiTaRS" id="MAP4K1">
    <property type="organism name" value="human"/>
</dbReference>
<dbReference type="GeneWiki" id="MAP4K1"/>
<dbReference type="GenomeRNAi" id="11184"/>
<dbReference type="Pharos" id="Q92918">
    <property type="development level" value="Tchem"/>
</dbReference>
<dbReference type="PRO" id="PR:Q92918"/>
<dbReference type="Proteomes" id="UP000005640">
    <property type="component" value="Chromosome 19"/>
</dbReference>
<dbReference type="RNAct" id="Q92918">
    <property type="molecule type" value="protein"/>
</dbReference>
<dbReference type="Bgee" id="ENSG00000104814">
    <property type="expression patterns" value="Expressed in granulocyte and 100 other cell types or tissues"/>
</dbReference>
<dbReference type="ExpressionAtlas" id="Q92918">
    <property type="expression patterns" value="baseline and differential"/>
</dbReference>
<dbReference type="GO" id="GO:0005737">
    <property type="term" value="C:cytoplasm"/>
    <property type="evidence" value="ECO:0000318"/>
    <property type="project" value="GO_Central"/>
</dbReference>
<dbReference type="GO" id="GO:0016020">
    <property type="term" value="C:membrane"/>
    <property type="evidence" value="ECO:0007005"/>
    <property type="project" value="UniProtKB"/>
</dbReference>
<dbReference type="GO" id="GO:0005524">
    <property type="term" value="F:ATP binding"/>
    <property type="evidence" value="ECO:0000314"/>
    <property type="project" value="UniProtKB"/>
</dbReference>
<dbReference type="GO" id="GO:0008349">
    <property type="term" value="F:MAP kinase kinase kinase kinase activity"/>
    <property type="evidence" value="ECO:0000314"/>
    <property type="project" value="UniProtKB"/>
</dbReference>
<dbReference type="GO" id="GO:0106310">
    <property type="term" value="F:protein serine kinase activity"/>
    <property type="evidence" value="ECO:0007669"/>
    <property type="project" value="RHEA"/>
</dbReference>
<dbReference type="GO" id="GO:0004674">
    <property type="term" value="F:protein serine/threonine kinase activity"/>
    <property type="evidence" value="ECO:0000314"/>
    <property type="project" value="UniProtKB"/>
</dbReference>
<dbReference type="GO" id="GO:0008283">
    <property type="term" value="P:cell population proliferation"/>
    <property type="evidence" value="ECO:0000315"/>
    <property type="project" value="UniProtKB"/>
</dbReference>
<dbReference type="GO" id="GO:1904628">
    <property type="term" value="P:cellular response to phorbol 13-acetate 12-myristate"/>
    <property type="evidence" value="ECO:0000314"/>
    <property type="project" value="UniProtKB"/>
</dbReference>
<dbReference type="GO" id="GO:0035556">
    <property type="term" value="P:intracellular signal transduction"/>
    <property type="evidence" value="ECO:0000318"/>
    <property type="project" value="GO_Central"/>
</dbReference>
<dbReference type="GO" id="GO:0007254">
    <property type="term" value="P:JNK cascade"/>
    <property type="evidence" value="ECO:0000314"/>
    <property type="project" value="UniProtKB"/>
</dbReference>
<dbReference type="GO" id="GO:0018105">
    <property type="term" value="P:peptidyl-serine phosphorylation"/>
    <property type="evidence" value="ECO:0000314"/>
    <property type="project" value="UniProtKB"/>
</dbReference>
<dbReference type="GO" id="GO:0043410">
    <property type="term" value="P:positive regulation of MAPK cascade"/>
    <property type="evidence" value="ECO:0000314"/>
    <property type="project" value="UniProtKB"/>
</dbReference>
<dbReference type="GO" id="GO:0046777">
    <property type="term" value="P:protein autophosphorylation"/>
    <property type="evidence" value="ECO:0000314"/>
    <property type="project" value="UniProtKB"/>
</dbReference>
<dbReference type="GO" id="GO:0006468">
    <property type="term" value="P:protein phosphorylation"/>
    <property type="evidence" value="ECO:0000314"/>
    <property type="project" value="UniProtKB"/>
</dbReference>
<dbReference type="CDD" id="cd06613">
    <property type="entry name" value="STKc_MAP4K3_like"/>
    <property type="match status" value="1"/>
</dbReference>
<dbReference type="FunFam" id="1.10.510.10:FF:000031">
    <property type="entry name" value="Mitogen-activated protein kinase kinase kinase kinase"/>
    <property type="match status" value="1"/>
</dbReference>
<dbReference type="Gene3D" id="1.10.510.10">
    <property type="entry name" value="Transferase(Phosphotransferase) domain 1"/>
    <property type="match status" value="1"/>
</dbReference>
<dbReference type="InterPro" id="IPR001180">
    <property type="entry name" value="CNH_dom"/>
</dbReference>
<dbReference type="InterPro" id="IPR011009">
    <property type="entry name" value="Kinase-like_dom_sf"/>
</dbReference>
<dbReference type="InterPro" id="IPR021160">
    <property type="entry name" value="MAPKKKK"/>
</dbReference>
<dbReference type="InterPro" id="IPR000719">
    <property type="entry name" value="Prot_kinase_dom"/>
</dbReference>
<dbReference type="InterPro" id="IPR017441">
    <property type="entry name" value="Protein_kinase_ATP_BS"/>
</dbReference>
<dbReference type="InterPro" id="IPR050629">
    <property type="entry name" value="STE20/SPS1-PAK"/>
</dbReference>
<dbReference type="PANTHER" id="PTHR48012:SF15">
    <property type="entry name" value="MITOGEN-ACTIVATED PROTEIN KINASE KINASE KINASE KINASE 1"/>
    <property type="match status" value="1"/>
</dbReference>
<dbReference type="PANTHER" id="PTHR48012">
    <property type="entry name" value="STERILE20-LIKE KINASE, ISOFORM B-RELATED"/>
    <property type="match status" value="1"/>
</dbReference>
<dbReference type="Pfam" id="PF00780">
    <property type="entry name" value="CNH"/>
    <property type="match status" value="1"/>
</dbReference>
<dbReference type="Pfam" id="PF00069">
    <property type="entry name" value="Pkinase"/>
    <property type="match status" value="1"/>
</dbReference>
<dbReference type="PIRSF" id="PIRSF038172">
    <property type="entry name" value="MAPKKKK"/>
    <property type="match status" value="1"/>
</dbReference>
<dbReference type="SMART" id="SM00036">
    <property type="entry name" value="CNH"/>
    <property type="match status" value="1"/>
</dbReference>
<dbReference type="SMART" id="SM00220">
    <property type="entry name" value="S_TKc"/>
    <property type="match status" value="1"/>
</dbReference>
<dbReference type="SUPFAM" id="SSF56112">
    <property type="entry name" value="Protein kinase-like (PK-like)"/>
    <property type="match status" value="1"/>
</dbReference>
<dbReference type="PROSITE" id="PS50219">
    <property type="entry name" value="CNH"/>
    <property type="match status" value="1"/>
</dbReference>
<dbReference type="PROSITE" id="PS00107">
    <property type="entry name" value="PROTEIN_KINASE_ATP"/>
    <property type="match status" value="1"/>
</dbReference>
<dbReference type="PROSITE" id="PS50011">
    <property type="entry name" value="PROTEIN_KINASE_DOM"/>
    <property type="match status" value="1"/>
</dbReference>
<reference evidence="9" key="1">
    <citation type="journal article" date="1996" name="Genes Dev.">
        <title>Human HPK1, a novel human hematopoietic progenitor kinase that activates the JNK/SAPK kinase cascade.</title>
        <authorList>
            <person name="Hu M.C.-T."/>
            <person name="Qiu W.R."/>
            <person name="Wang X."/>
            <person name="Meyer C.F."/>
            <person name="Tan T.-H."/>
        </authorList>
    </citation>
    <scope>NUCLEOTIDE SEQUENCE [MRNA] (ISOFORM 1)</scope>
    <scope>FUNCTION</scope>
    <scope>CATALYTIC ACTIVITY</scope>
    <scope>TISSUE SPECIFICITY</scope>
    <scope>INTERACTION WITH MAP3K1</scope>
    <scope>AUTOPHOSPHYRILATION</scope>
    <source>
        <tissue>Fetal liver</tissue>
    </source>
</reference>
<reference key="2">
    <citation type="journal article" date="2004" name="Nature">
        <title>The DNA sequence and biology of human chromosome 19.</title>
        <authorList>
            <person name="Grimwood J."/>
            <person name="Gordon L.A."/>
            <person name="Olsen A.S."/>
            <person name="Terry A."/>
            <person name="Schmutz J."/>
            <person name="Lamerdin J.E."/>
            <person name="Hellsten U."/>
            <person name="Goodstein D."/>
            <person name="Couronne O."/>
            <person name="Tran-Gyamfi M."/>
            <person name="Aerts A."/>
            <person name="Altherr M."/>
            <person name="Ashworth L."/>
            <person name="Bajorek E."/>
            <person name="Black S."/>
            <person name="Branscomb E."/>
            <person name="Caenepeel S."/>
            <person name="Carrano A.V."/>
            <person name="Caoile C."/>
            <person name="Chan Y.M."/>
            <person name="Christensen M."/>
            <person name="Cleland C.A."/>
            <person name="Copeland A."/>
            <person name="Dalin E."/>
            <person name="Dehal P."/>
            <person name="Denys M."/>
            <person name="Detter J.C."/>
            <person name="Escobar J."/>
            <person name="Flowers D."/>
            <person name="Fotopulos D."/>
            <person name="Garcia C."/>
            <person name="Georgescu A.M."/>
            <person name="Glavina T."/>
            <person name="Gomez M."/>
            <person name="Gonzales E."/>
            <person name="Groza M."/>
            <person name="Hammon N."/>
            <person name="Hawkins T."/>
            <person name="Haydu L."/>
            <person name="Ho I."/>
            <person name="Huang W."/>
            <person name="Israni S."/>
            <person name="Jett J."/>
            <person name="Kadner K."/>
            <person name="Kimball H."/>
            <person name="Kobayashi A."/>
            <person name="Larionov V."/>
            <person name="Leem S.-H."/>
            <person name="Lopez F."/>
            <person name="Lou Y."/>
            <person name="Lowry S."/>
            <person name="Malfatti S."/>
            <person name="Martinez D."/>
            <person name="McCready P.M."/>
            <person name="Medina C."/>
            <person name="Morgan J."/>
            <person name="Nelson K."/>
            <person name="Nolan M."/>
            <person name="Ovcharenko I."/>
            <person name="Pitluck S."/>
            <person name="Pollard M."/>
            <person name="Popkie A.P."/>
            <person name="Predki P."/>
            <person name="Quan G."/>
            <person name="Ramirez L."/>
            <person name="Rash S."/>
            <person name="Retterer J."/>
            <person name="Rodriguez A."/>
            <person name="Rogers S."/>
            <person name="Salamov A."/>
            <person name="Salazar A."/>
            <person name="She X."/>
            <person name="Smith D."/>
            <person name="Slezak T."/>
            <person name="Solovyev V."/>
            <person name="Thayer N."/>
            <person name="Tice H."/>
            <person name="Tsai M."/>
            <person name="Ustaszewska A."/>
            <person name="Vo N."/>
            <person name="Wagner M."/>
            <person name="Wheeler J."/>
            <person name="Wu K."/>
            <person name="Xie G."/>
            <person name="Yang J."/>
            <person name="Dubchak I."/>
            <person name="Furey T.S."/>
            <person name="DeJong P."/>
            <person name="Dickson M."/>
            <person name="Gordon D."/>
            <person name="Eichler E.E."/>
            <person name="Pennacchio L.A."/>
            <person name="Richardson P."/>
            <person name="Stubbs L."/>
            <person name="Rokhsar D.S."/>
            <person name="Myers R.M."/>
            <person name="Rubin E.M."/>
            <person name="Lucas S.M."/>
        </authorList>
    </citation>
    <scope>NUCLEOTIDE SEQUENCE [LARGE SCALE GENOMIC DNA]</scope>
</reference>
<reference key="3">
    <citation type="journal article" date="2009" name="Mol. Cell. Proteomics">
        <title>Large-scale proteomics analysis of the human kinome.</title>
        <authorList>
            <person name="Oppermann F.S."/>
            <person name="Gnad F."/>
            <person name="Olsen J.V."/>
            <person name="Hornberger R."/>
            <person name="Greff Z."/>
            <person name="Keri G."/>
            <person name="Mann M."/>
            <person name="Daub H."/>
        </authorList>
    </citation>
    <scope>PHOSPHORYLATION [LARGE SCALE ANALYSIS] AT SER-421 AND SER-586</scope>
    <scope>IDENTIFICATION BY MASS SPECTROMETRY [LARGE SCALE ANALYSIS]</scope>
</reference>
<reference key="4">
    <citation type="journal article" date="2009" name="Sci. Signal.">
        <title>Quantitative phosphoproteomic analysis of T cell receptor signaling reveals system-wide modulation of protein-protein interactions.</title>
        <authorList>
            <person name="Mayya V."/>
            <person name="Lundgren D.H."/>
            <person name="Hwang S.-I."/>
            <person name="Rezaul K."/>
            <person name="Wu L."/>
            <person name="Eng J.K."/>
            <person name="Rodionov V."/>
            <person name="Han D.K."/>
        </authorList>
    </citation>
    <scope>PHOSPHORYLATION [LARGE SCALE ANALYSIS] AT SER-405; SER-407; SER-413 AND SER-421</scope>
    <scope>IDENTIFICATION BY MASS SPECTROMETRY [LARGE SCALE ANALYSIS]</scope>
    <source>
        <tissue>Leukemic T-cell</tissue>
    </source>
</reference>
<reference key="5">
    <citation type="journal article" date="2011" name="BMC Syst. Biol.">
        <title>Initial characterization of the human central proteome.</title>
        <authorList>
            <person name="Burkard T.R."/>
            <person name="Planyavsky M."/>
            <person name="Kaupe I."/>
            <person name="Breitwieser F.P."/>
            <person name="Buerckstuemmer T."/>
            <person name="Bennett K.L."/>
            <person name="Superti-Furga G."/>
            <person name="Colinge J."/>
        </authorList>
    </citation>
    <scope>IDENTIFICATION BY MASS SPECTROMETRY [LARGE SCALE ANALYSIS]</scope>
</reference>
<reference key="6">
    <citation type="journal article" date="2007" name="Nature">
        <title>Patterns of somatic mutation in human cancer genomes.</title>
        <authorList>
            <person name="Greenman C."/>
            <person name="Stephens P."/>
            <person name="Smith R."/>
            <person name="Dalgliesh G.L."/>
            <person name="Hunter C."/>
            <person name="Bignell G."/>
            <person name="Davies H."/>
            <person name="Teague J."/>
            <person name="Butler A."/>
            <person name="Stevens C."/>
            <person name="Edkins S."/>
            <person name="O'Meara S."/>
            <person name="Vastrik I."/>
            <person name="Schmidt E.E."/>
            <person name="Avis T."/>
            <person name="Barthorpe S."/>
            <person name="Bhamra G."/>
            <person name="Buck G."/>
            <person name="Choudhury B."/>
            <person name="Clements J."/>
            <person name="Cole J."/>
            <person name="Dicks E."/>
            <person name="Forbes S."/>
            <person name="Gray K."/>
            <person name="Halliday K."/>
            <person name="Harrison R."/>
            <person name="Hills K."/>
            <person name="Hinton J."/>
            <person name="Jenkinson A."/>
            <person name="Jones D."/>
            <person name="Menzies A."/>
            <person name="Mironenko T."/>
            <person name="Perry J."/>
            <person name="Raine K."/>
            <person name="Richardson D."/>
            <person name="Shepherd R."/>
            <person name="Small A."/>
            <person name="Tofts C."/>
            <person name="Varian J."/>
            <person name="Webb T."/>
            <person name="West S."/>
            <person name="Widaa S."/>
            <person name="Yates A."/>
            <person name="Cahill D.P."/>
            <person name="Louis D.N."/>
            <person name="Goldstraw P."/>
            <person name="Nicholson A.G."/>
            <person name="Brasseur F."/>
            <person name="Looijenga L."/>
            <person name="Weber B.L."/>
            <person name="Chiew Y.-E."/>
            <person name="DeFazio A."/>
            <person name="Greaves M.F."/>
            <person name="Green A.R."/>
            <person name="Campbell P."/>
            <person name="Birney E."/>
            <person name="Easton D.F."/>
            <person name="Chenevix-Trench G."/>
            <person name="Tan M.-H."/>
            <person name="Khoo S.K."/>
            <person name="Teh B.T."/>
            <person name="Yuen S.T."/>
            <person name="Leung S.Y."/>
            <person name="Wooster R."/>
            <person name="Futreal P.A."/>
            <person name="Stratton M.R."/>
        </authorList>
    </citation>
    <scope>VARIANTS [LARGE SCALE ANALYSIS] THR-312; SER-351; LEU-361 AND PHE-737</scope>
</reference>
<reference key="7">
    <citation type="journal article" date="2014" name="J. Biol. Chem.">
        <title>The CUL7/F-box and WD repeat domain containing 8 (CUL7/Fbxw8) ubiquitin ligase promotes degradation of hematopoietic progenitor kinase 1.</title>
        <authorList>
            <person name="Wang H."/>
            <person name="Chen Y."/>
            <person name="Lin P."/>
            <person name="Li L."/>
            <person name="Zhou G."/>
            <person name="Liu G."/>
            <person name="Logsdon C."/>
            <person name="Jin J."/>
            <person name="Abbruzzese J.L."/>
            <person name="Tan T.H."/>
            <person name="Wang H."/>
        </authorList>
    </citation>
    <scope>FUNCTION</scope>
    <scope>PHOSPHORYLATION AT THR-165; SER-171; THR-175 AND THR-355</scope>
    <scope>UBIQUITINATION</scope>
    <scope>MUTAGENESIS OF THR-355</scope>
    <scope>INTERACTION WITH FBXW8</scope>
</reference>
<reference key="8">
    <citation type="journal article" date="2015" name="Nat. Commun.">
        <title>MAP4K family kinases act in parallel to MST1/2 to activate LATS1/2 in the Hippo pathway.</title>
        <authorList>
            <person name="Meng Z."/>
            <person name="Moroishi T."/>
            <person name="Mottier-Pavie V."/>
            <person name="Plouffe S.W."/>
            <person name="Hansen C.G."/>
            <person name="Hong A.W."/>
            <person name="Park H.W."/>
            <person name="Mo J.S."/>
            <person name="Lu W."/>
            <person name="Lu S."/>
            <person name="Flores F."/>
            <person name="Yu F.X."/>
            <person name="Halder G."/>
            <person name="Guan K.L."/>
        </authorList>
    </citation>
    <scope>FUNCTION</scope>
</reference>
<organism evidence="10">
    <name type="scientific">Homo sapiens</name>
    <name type="common">Human</name>
    <dbReference type="NCBI Taxonomy" id="9606"/>
    <lineage>
        <taxon>Eukaryota</taxon>
        <taxon>Metazoa</taxon>
        <taxon>Chordata</taxon>
        <taxon>Craniata</taxon>
        <taxon>Vertebrata</taxon>
        <taxon>Euteleostomi</taxon>
        <taxon>Mammalia</taxon>
        <taxon>Eutheria</taxon>
        <taxon>Euarchontoglires</taxon>
        <taxon>Primates</taxon>
        <taxon>Haplorrhini</taxon>
        <taxon>Catarrhini</taxon>
        <taxon>Hominidae</taxon>
        <taxon>Homo</taxon>
    </lineage>
</organism>
<feature type="chain" id="PRO_0000086273" description="Mitogen-activated protein kinase kinase kinase kinase 1">
    <location>
        <begin position="1"/>
        <end position="833"/>
    </location>
</feature>
<feature type="domain" description="Protein kinase" evidence="2">
    <location>
        <begin position="17"/>
        <end position="274"/>
    </location>
</feature>
<feature type="domain" description="CNH" evidence="3">
    <location>
        <begin position="495"/>
        <end position="800"/>
    </location>
</feature>
<feature type="region of interest" description="Disordered" evidence="4">
    <location>
        <begin position="296"/>
        <end position="478"/>
    </location>
</feature>
<feature type="compositionally biased region" description="Basic and acidic residues" evidence="4">
    <location>
        <begin position="333"/>
        <end position="348"/>
    </location>
</feature>
<feature type="compositionally biased region" description="Polar residues" evidence="4">
    <location>
        <begin position="366"/>
        <end position="375"/>
    </location>
</feature>
<feature type="compositionally biased region" description="Acidic residues" evidence="4">
    <location>
        <begin position="376"/>
        <end position="385"/>
    </location>
</feature>
<feature type="compositionally biased region" description="Pro residues" evidence="4">
    <location>
        <begin position="431"/>
        <end position="445"/>
    </location>
</feature>
<feature type="active site" description="Proton acceptor" evidence="2">
    <location>
        <position position="137"/>
    </location>
</feature>
<feature type="binding site" evidence="2">
    <location>
        <begin position="23"/>
        <end position="31"/>
    </location>
    <ligand>
        <name>ATP</name>
        <dbReference type="ChEBI" id="CHEBI:30616"/>
    </ligand>
</feature>
<feature type="binding site" evidence="2">
    <location>
        <position position="46"/>
    </location>
    <ligand>
        <name>ATP</name>
        <dbReference type="ChEBI" id="CHEBI:30616"/>
    </ligand>
</feature>
<feature type="modified residue" description="Phosphothreonine; by autocatalysis" evidence="6">
    <location>
        <position position="165"/>
    </location>
</feature>
<feature type="modified residue" description="Phosphoserine; by autocatalysis" evidence="6">
    <location>
        <position position="171"/>
    </location>
</feature>
<feature type="modified residue" description="Phosphothreonine; by autocatalysis" evidence="6">
    <location>
        <position position="175"/>
    </location>
</feature>
<feature type="modified residue" description="Phosphothreonine; by autocatalysis" evidence="6">
    <location>
        <position position="355"/>
    </location>
</feature>
<feature type="modified residue" description="Phosphoserine" evidence="1">
    <location>
        <position position="374"/>
    </location>
</feature>
<feature type="modified residue" description="Phosphoserine" evidence="1">
    <location>
        <position position="376"/>
    </location>
</feature>
<feature type="modified residue" description="Phosphoserine" evidence="13">
    <location>
        <position position="405"/>
    </location>
</feature>
<feature type="modified residue" description="Phosphoserine" evidence="13">
    <location>
        <position position="407"/>
    </location>
</feature>
<feature type="modified residue" description="Phosphoserine" evidence="13">
    <location>
        <position position="413"/>
    </location>
</feature>
<feature type="modified residue" description="Phosphoserine" evidence="12 13">
    <location>
        <position position="421"/>
    </location>
</feature>
<feature type="modified residue" description="Phosphoserine" evidence="12">
    <location>
        <position position="586"/>
    </location>
</feature>
<feature type="splice variant" id="VSP_040340" description="In isoform 2." evidence="9">
    <original>LECSGTISPHCNLLLPGSSNSPASASRVAGITGL</original>
    <variation>PVVVETRPVDDPTAPSNLYIQE</variation>
    <location>
        <begin position="800"/>
        <end position="833"/>
    </location>
</feature>
<feature type="sequence variant" id="VAR_040739" description="In dbSNP:rs55924696." evidence="5">
    <original>P</original>
    <variation>T</variation>
    <location>
        <position position="312"/>
    </location>
</feature>
<feature type="sequence variant" id="VAR_040740" description="In dbSNP:rs34591617." evidence="5">
    <original>P</original>
    <variation>S</variation>
    <location>
        <position position="351"/>
    </location>
</feature>
<feature type="sequence variant" id="VAR_040741" description="In dbSNP:rs56060067." evidence="5">
    <original>P</original>
    <variation>L</variation>
    <location>
        <position position="361"/>
    </location>
</feature>
<feature type="sequence variant" id="VAR_040742" description="In a metastatic melanoma sample; somatic mutation; dbSNP:rs1238066548." evidence="5">
    <original>S</original>
    <variation>F</variation>
    <location>
        <position position="737"/>
    </location>
</feature>
<feature type="sequence variant" id="VAR_051643" description="In dbSNP:rs12975825.">
    <original>N</original>
    <variation>S</variation>
    <location>
        <position position="811"/>
    </location>
</feature>
<feature type="mutagenesis site" description="Retains kinase activity. Not degraded by the Cul7-RING ubiquitin-protein ligase complex containing FBXW8." evidence="6">
    <original>T</original>
    <variation>A</variation>
    <location>
        <position position="355"/>
    </location>
</feature>
<feature type="strand" evidence="16">
    <location>
        <begin position="9"/>
        <end position="11"/>
    </location>
</feature>
<feature type="helix" evidence="15">
    <location>
        <begin position="13"/>
        <end position="15"/>
    </location>
</feature>
<feature type="strand" evidence="15">
    <location>
        <begin position="17"/>
        <end position="26"/>
    </location>
</feature>
<feature type="strand" evidence="15">
    <location>
        <begin position="29"/>
        <end position="36"/>
    </location>
</feature>
<feature type="turn" evidence="15">
    <location>
        <begin position="37"/>
        <end position="39"/>
    </location>
</feature>
<feature type="strand" evidence="15">
    <location>
        <begin position="42"/>
        <end position="49"/>
    </location>
</feature>
<feature type="strand" evidence="19">
    <location>
        <begin position="52"/>
        <end position="54"/>
    </location>
</feature>
<feature type="helix" evidence="15">
    <location>
        <begin position="57"/>
        <end position="67"/>
    </location>
</feature>
<feature type="strand" evidence="15">
    <location>
        <begin position="77"/>
        <end position="83"/>
    </location>
</feature>
<feature type="strand" evidence="15">
    <location>
        <begin position="86"/>
        <end position="92"/>
    </location>
</feature>
<feature type="helix" evidence="15">
    <location>
        <begin position="99"/>
        <end position="106"/>
    </location>
</feature>
<feature type="helix" evidence="15">
    <location>
        <begin position="111"/>
        <end position="130"/>
    </location>
</feature>
<feature type="helix" evidence="15">
    <location>
        <begin position="140"/>
        <end position="142"/>
    </location>
</feature>
<feature type="strand" evidence="15">
    <location>
        <begin position="143"/>
        <end position="145"/>
    </location>
</feature>
<feature type="strand" evidence="15">
    <location>
        <begin position="151"/>
        <end position="153"/>
    </location>
</feature>
<feature type="helix" evidence="15">
    <location>
        <begin position="157"/>
        <end position="171"/>
    </location>
</feature>
<feature type="helix" evidence="14">
    <location>
        <begin position="176"/>
        <end position="178"/>
    </location>
</feature>
<feature type="helix" evidence="15">
    <location>
        <begin position="181"/>
        <end position="189"/>
    </location>
</feature>
<feature type="helix" evidence="15">
    <location>
        <begin position="196"/>
        <end position="210"/>
    </location>
</feature>
<feature type="turn" evidence="15">
    <location>
        <begin position="214"/>
        <end position="217"/>
    </location>
</feature>
<feature type="helix" evidence="15">
    <location>
        <begin position="220"/>
        <end position="227"/>
    </location>
</feature>
<feature type="turn" evidence="15">
    <location>
        <begin position="240"/>
        <end position="242"/>
    </location>
</feature>
<feature type="helix" evidence="15">
    <location>
        <begin position="245"/>
        <end position="254"/>
    </location>
</feature>
<feature type="helix" evidence="15">
    <location>
        <begin position="259"/>
        <end position="261"/>
    </location>
</feature>
<feature type="helix" evidence="15">
    <location>
        <begin position="265"/>
        <end position="268"/>
    </location>
</feature>
<feature type="helix" evidence="15">
    <location>
        <begin position="272"/>
        <end position="275"/>
    </location>
</feature>
<feature type="helix" evidence="15">
    <location>
        <begin position="282"/>
        <end position="292"/>
    </location>
</feature>
<feature type="strand" evidence="18">
    <location>
        <begin position="296"/>
        <end position="298"/>
    </location>
</feature>
<feature type="strand" evidence="17">
    <location>
        <begin position="488"/>
        <end position="494"/>
    </location>
</feature>
<feature type="strand" evidence="17">
    <location>
        <begin position="498"/>
        <end position="505"/>
    </location>
</feature>
<feature type="strand" evidence="17">
    <location>
        <begin position="512"/>
        <end position="518"/>
    </location>
</feature>
<feature type="strand" evidence="17">
    <location>
        <begin position="521"/>
        <end position="528"/>
    </location>
</feature>
<feature type="strand" evidence="17">
    <location>
        <begin position="531"/>
        <end position="538"/>
    </location>
</feature>
<feature type="strand" evidence="17">
    <location>
        <begin position="542"/>
        <end position="548"/>
    </location>
</feature>
<feature type="strand" evidence="17">
    <location>
        <begin position="551"/>
        <end position="556"/>
    </location>
</feature>
<feature type="turn" evidence="17">
    <location>
        <begin position="557"/>
        <end position="560"/>
    </location>
</feature>
<feature type="strand" evidence="17">
    <location>
        <begin position="561"/>
        <end position="566"/>
    </location>
</feature>
<feature type="helix" evidence="17">
    <location>
        <begin position="567"/>
        <end position="572"/>
    </location>
</feature>
<feature type="strand" evidence="17">
    <location>
        <begin position="598"/>
        <end position="600"/>
    </location>
</feature>
<feature type="strand" evidence="17">
    <location>
        <begin position="609"/>
        <end position="613"/>
    </location>
</feature>
<feature type="strand" evidence="17">
    <location>
        <begin position="622"/>
        <end position="626"/>
    </location>
</feature>
<feature type="strand" evidence="17">
    <location>
        <begin position="628"/>
        <end position="637"/>
    </location>
</feature>
<feature type="helix" evidence="17">
    <location>
        <begin position="638"/>
        <end position="640"/>
    </location>
</feature>
<feature type="strand" evidence="17">
    <location>
        <begin position="642"/>
        <end position="650"/>
    </location>
</feature>
<feature type="strand" evidence="17">
    <location>
        <begin position="661"/>
        <end position="663"/>
    </location>
</feature>
<feature type="strand" evidence="17">
    <location>
        <begin position="672"/>
        <end position="679"/>
    </location>
</feature>
<feature type="turn" evidence="17">
    <location>
        <begin position="682"/>
        <end position="684"/>
    </location>
</feature>
<feature type="strand" evidence="17">
    <location>
        <begin position="686"/>
        <end position="691"/>
    </location>
</feature>
<feature type="strand" evidence="17">
    <location>
        <begin position="707"/>
        <end position="709"/>
    </location>
</feature>
<feature type="strand" evidence="17">
    <location>
        <begin position="712"/>
        <end position="717"/>
    </location>
</feature>
<feature type="strand" evidence="17">
    <location>
        <begin position="720"/>
        <end position="725"/>
    </location>
</feature>
<feature type="strand" evidence="17">
    <location>
        <begin position="728"/>
        <end position="732"/>
    </location>
</feature>
<feature type="strand" evidence="17">
    <location>
        <begin position="741"/>
        <end position="743"/>
    </location>
</feature>
<feature type="strand" evidence="17">
    <location>
        <begin position="746"/>
        <end position="748"/>
    </location>
</feature>
<feature type="strand" evidence="17">
    <location>
        <begin position="753"/>
        <end position="758"/>
    </location>
</feature>
<feature type="strand" evidence="17">
    <location>
        <begin position="760"/>
        <end position="767"/>
    </location>
</feature>
<feature type="strand" evidence="17">
    <location>
        <begin position="770"/>
        <end position="774"/>
    </location>
</feature>
<feature type="turn" evidence="17">
    <location>
        <begin position="776"/>
        <end position="778"/>
    </location>
</feature>
<feature type="strand" evidence="17">
    <location>
        <begin position="784"/>
        <end position="786"/>
    </location>
</feature>
<feature type="strand" evidence="17">
    <location>
        <begin position="790"/>
        <end position="796"/>
    </location>
</feature>
<accession>Q92918</accession>